<keyword id="KW-0030">Aminoacyl-tRNA synthetase</keyword>
<keyword id="KW-0067">ATP-binding</keyword>
<keyword id="KW-0963">Cytoplasm</keyword>
<keyword id="KW-0436">Ligase</keyword>
<keyword id="KW-0547">Nucleotide-binding</keyword>
<keyword id="KW-0648">Protein biosynthesis</keyword>
<reference key="1">
    <citation type="journal article" date="2008" name="PLoS Genet.">
        <title>Complete genome sequence of the N2-fixing broad host range endophyte Klebsiella pneumoniae 342 and virulence predictions verified in mice.</title>
        <authorList>
            <person name="Fouts D.E."/>
            <person name="Tyler H.L."/>
            <person name="DeBoy R.T."/>
            <person name="Daugherty S."/>
            <person name="Ren Q."/>
            <person name="Badger J.H."/>
            <person name="Durkin A.S."/>
            <person name="Huot H."/>
            <person name="Shrivastava S."/>
            <person name="Kothari S."/>
            <person name="Dodson R.J."/>
            <person name="Mohamoud Y."/>
            <person name="Khouri H."/>
            <person name="Roesch L.F.W."/>
            <person name="Krogfelt K.A."/>
            <person name="Struve C."/>
            <person name="Triplett E.W."/>
            <person name="Methe B.A."/>
        </authorList>
    </citation>
    <scope>NUCLEOTIDE SEQUENCE [LARGE SCALE GENOMIC DNA]</scope>
    <source>
        <strain>342</strain>
    </source>
</reference>
<feature type="chain" id="PRO_1000199397" description="Proline--tRNA ligase">
    <location>
        <begin position="1"/>
        <end position="572"/>
    </location>
</feature>
<proteinExistence type="inferred from homology"/>
<sequence length="572" mass="63570">MRTSQYLLSTLKETPADAEVISHQLMLRAGMIRKLASGLYTWLPTGVRVLKKVENIVREEMNNAGAIEVLMPVVQPSELWQESGRWEQYGPELLRIADRGDRPFVLGPTHEEVITDLIRNELNSYKQLPLNFYQIQTKFRDEVRPRFGVMRSREFLMKDAYSFHTSQESLQETYDAMYTAYSKIFSRMGLDFRAVQADTGSIGGSASHEFQVLAQSGEDDVIFSDSSDYAANIEFAEAVAPKEPRAAATQEMTLVDTPNAKTIAELVEQFDLPIEKTVKTLLVKAVEGSASPLIALLVRGDHELNEVKAEKLPQVASPLTFATEEEIRALVKAGPGSLGPVNLPIPVVIDRTVAVMSDFAAGANIDGKHYFGINWDRDVATPEVADIRNVVAGDPSPDGKGTLLIKRGIEVGHIFQLGTKYSQAMNAAVQGEDGRNQILTMGCYGIGVTRVVAAAIEQNFDDRGIIWPDAIAPFQVAILPMNMHKSYRVQELAEKLYAELRAHGIDVLMDDRKERPGVMFADMELIGIPHTIVLGDRNLDNDDIEYKYRRNGEKQLIKTGDIVEYLVKAIKG</sequence>
<gene>
    <name evidence="1" type="primary">proS</name>
    <name type="ordered locus">KPK_4526</name>
</gene>
<evidence type="ECO:0000255" key="1">
    <source>
        <dbReference type="HAMAP-Rule" id="MF_01569"/>
    </source>
</evidence>
<comment type="function">
    <text evidence="1">Catalyzes the attachment of proline to tRNA(Pro) in a two-step reaction: proline is first activated by ATP to form Pro-AMP and then transferred to the acceptor end of tRNA(Pro). As ProRS can inadvertently accommodate and process non-cognate amino acids such as alanine and cysteine, to avoid such errors it has two additional distinct editing activities against alanine. One activity is designated as 'pretransfer' editing and involves the tRNA(Pro)-independent hydrolysis of activated Ala-AMP. The other activity is designated 'posttransfer' editing and involves deacylation of mischarged Ala-tRNA(Pro). The misacylated Cys-tRNA(Pro) is not edited by ProRS.</text>
</comment>
<comment type="catalytic activity">
    <reaction evidence="1">
        <text>tRNA(Pro) + L-proline + ATP = L-prolyl-tRNA(Pro) + AMP + diphosphate</text>
        <dbReference type="Rhea" id="RHEA:14305"/>
        <dbReference type="Rhea" id="RHEA-COMP:9700"/>
        <dbReference type="Rhea" id="RHEA-COMP:9702"/>
        <dbReference type="ChEBI" id="CHEBI:30616"/>
        <dbReference type="ChEBI" id="CHEBI:33019"/>
        <dbReference type="ChEBI" id="CHEBI:60039"/>
        <dbReference type="ChEBI" id="CHEBI:78442"/>
        <dbReference type="ChEBI" id="CHEBI:78532"/>
        <dbReference type="ChEBI" id="CHEBI:456215"/>
        <dbReference type="EC" id="6.1.1.15"/>
    </reaction>
</comment>
<comment type="subunit">
    <text evidence="1">Homodimer.</text>
</comment>
<comment type="subcellular location">
    <subcellularLocation>
        <location evidence="1">Cytoplasm</location>
    </subcellularLocation>
</comment>
<comment type="domain">
    <text evidence="1">Consists of three domains: the N-terminal catalytic domain, the editing domain and the C-terminal anticodon-binding domain.</text>
</comment>
<comment type="similarity">
    <text evidence="1">Belongs to the class-II aminoacyl-tRNA synthetase family. ProS type 1 subfamily.</text>
</comment>
<accession>B5Y1H7</accession>
<protein>
    <recommendedName>
        <fullName evidence="1">Proline--tRNA ligase</fullName>
        <ecNumber evidence="1">6.1.1.15</ecNumber>
    </recommendedName>
    <alternativeName>
        <fullName evidence="1">Prolyl-tRNA synthetase</fullName>
        <shortName evidence="1">ProRS</shortName>
    </alternativeName>
</protein>
<dbReference type="EC" id="6.1.1.15" evidence="1"/>
<dbReference type="EMBL" id="CP000964">
    <property type="protein sequence ID" value="ACI10346.1"/>
    <property type="molecule type" value="Genomic_DNA"/>
</dbReference>
<dbReference type="SMR" id="B5Y1H7"/>
<dbReference type="KEGG" id="kpe:KPK_4526"/>
<dbReference type="HOGENOM" id="CLU_016739_0_0_6"/>
<dbReference type="Proteomes" id="UP000001734">
    <property type="component" value="Chromosome"/>
</dbReference>
<dbReference type="GO" id="GO:0005829">
    <property type="term" value="C:cytosol"/>
    <property type="evidence" value="ECO:0007669"/>
    <property type="project" value="TreeGrafter"/>
</dbReference>
<dbReference type="GO" id="GO:0002161">
    <property type="term" value="F:aminoacyl-tRNA deacylase activity"/>
    <property type="evidence" value="ECO:0007669"/>
    <property type="project" value="InterPro"/>
</dbReference>
<dbReference type="GO" id="GO:0005524">
    <property type="term" value="F:ATP binding"/>
    <property type="evidence" value="ECO:0007669"/>
    <property type="project" value="UniProtKB-UniRule"/>
</dbReference>
<dbReference type="GO" id="GO:0004827">
    <property type="term" value="F:proline-tRNA ligase activity"/>
    <property type="evidence" value="ECO:0007669"/>
    <property type="project" value="UniProtKB-UniRule"/>
</dbReference>
<dbReference type="GO" id="GO:0006433">
    <property type="term" value="P:prolyl-tRNA aminoacylation"/>
    <property type="evidence" value="ECO:0007669"/>
    <property type="project" value="UniProtKB-UniRule"/>
</dbReference>
<dbReference type="CDD" id="cd04334">
    <property type="entry name" value="ProRS-INS"/>
    <property type="match status" value="1"/>
</dbReference>
<dbReference type="CDD" id="cd00861">
    <property type="entry name" value="ProRS_anticodon_short"/>
    <property type="match status" value="1"/>
</dbReference>
<dbReference type="CDD" id="cd00779">
    <property type="entry name" value="ProRS_core_prok"/>
    <property type="match status" value="1"/>
</dbReference>
<dbReference type="FunFam" id="3.30.930.10:FF:000043">
    <property type="entry name" value="Proline--tRNA ligase"/>
    <property type="match status" value="1"/>
</dbReference>
<dbReference type="FunFam" id="3.30.930.10:FF:000097">
    <property type="entry name" value="Proline--tRNA ligase"/>
    <property type="match status" value="1"/>
</dbReference>
<dbReference type="FunFam" id="3.40.50.800:FF:000006">
    <property type="entry name" value="Proline--tRNA ligase"/>
    <property type="match status" value="1"/>
</dbReference>
<dbReference type="FunFam" id="3.90.960.10:FF:000001">
    <property type="entry name" value="Proline--tRNA ligase"/>
    <property type="match status" value="1"/>
</dbReference>
<dbReference type="Gene3D" id="3.40.50.800">
    <property type="entry name" value="Anticodon-binding domain"/>
    <property type="match status" value="1"/>
</dbReference>
<dbReference type="Gene3D" id="3.30.930.10">
    <property type="entry name" value="Bira Bifunctional Protein, Domain 2"/>
    <property type="match status" value="2"/>
</dbReference>
<dbReference type="Gene3D" id="3.90.960.10">
    <property type="entry name" value="YbaK/aminoacyl-tRNA synthetase-associated domain"/>
    <property type="match status" value="1"/>
</dbReference>
<dbReference type="HAMAP" id="MF_01569">
    <property type="entry name" value="Pro_tRNA_synth_type1"/>
    <property type="match status" value="1"/>
</dbReference>
<dbReference type="InterPro" id="IPR002314">
    <property type="entry name" value="aa-tRNA-synt_IIb"/>
</dbReference>
<dbReference type="InterPro" id="IPR006195">
    <property type="entry name" value="aa-tRNA-synth_II"/>
</dbReference>
<dbReference type="InterPro" id="IPR045864">
    <property type="entry name" value="aa-tRNA-synth_II/BPL/LPL"/>
</dbReference>
<dbReference type="InterPro" id="IPR004154">
    <property type="entry name" value="Anticodon-bd"/>
</dbReference>
<dbReference type="InterPro" id="IPR036621">
    <property type="entry name" value="Anticodon-bd_dom_sf"/>
</dbReference>
<dbReference type="InterPro" id="IPR002316">
    <property type="entry name" value="Pro-tRNA-ligase_IIa"/>
</dbReference>
<dbReference type="InterPro" id="IPR004500">
    <property type="entry name" value="Pro-tRNA-synth_IIa_bac-type"/>
</dbReference>
<dbReference type="InterPro" id="IPR023717">
    <property type="entry name" value="Pro-tRNA-Synthase_IIa_type1"/>
</dbReference>
<dbReference type="InterPro" id="IPR050062">
    <property type="entry name" value="Pro-tRNA_synthetase"/>
</dbReference>
<dbReference type="InterPro" id="IPR044140">
    <property type="entry name" value="ProRS_anticodon_short"/>
</dbReference>
<dbReference type="InterPro" id="IPR033730">
    <property type="entry name" value="ProRS_core_prok"/>
</dbReference>
<dbReference type="InterPro" id="IPR036754">
    <property type="entry name" value="YbaK/aa-tRNA-synt-asso_dom_sf"/>
</dbReference>
<dbReference type="InterPro" id="IPR007214">
    <property type="entry name" value="YbaK/aa-tRNA-synth-assoc-dom"/>
</dbReference>
<dbReference type="NCBIfam" id="NF006625">
    <property type="entry name" value="PRK09194.1"/>
    <property type="match status" value="1"/>
</dbReference>
<dbReference type="NCBIfam" id="TIGR00409">
    <property type="entry name" value="proS_fam_II"/>
    <property type="match status" value="1"/>
</dbReference>
<dbReference type="PANTHER" id="PTHR42753">
    <property type="entry name" value="MITOCHONDRIAL RIBOSOME PROTEIN L39/PROLYL-TRNA LIGASE FAMILY MEMBER"/>
    <property type="match status" value="1"/>
</dbReference>
<dbReference type="PANTHER" id="PTHR42753:SF2">
    <property type="entry name" value="PROLINE--TRNA LIGASE"/>
    <property type="match status" value="1"/>
</dbReference>
<dbReference type="Pfam" id="PF03129">
    <property type="entry name" value="HGTP_anticodon"/>
    <property type="match status" value="1"/>
</dbReference>
<dbReference type="Pfam" id="PF00587">
    <property type="entry name" value="tRNA-synt_2b"/>
    <property type="match status" value="1"/>
</dbReference>
<dbReference type="Pfam" id="PF04073">
    <property type="entry name" value="tRNA_edit"/>
    <property type="match status" value="1"/>
</dbReference>
<dbReference type="PIRSF" id="PIRSF001535">
    <property type="entry name" value="ProRS_1"/>
    <property type="match status" value="1"/>
</dbReference>
<dbReference type="PRINTS" id="PR01046">
    <property type="entry name" value="TRNASYNTHPRO"/>
</dbReference>
<dbReference type="SUPFAM" id="SSF52954">
    <property type="entry name" value="Class II aaRS ABD-related"/>
    <property type="match status" value="1"/>
</dbReference>
<dbReference type="SUPFAM" id="SSF55681">
    <property type="entry name" value="Class II aaRS and biotin synthetases"/>
    <property type="match status" value="1"/>
</dbReference>
<dbReference type="SUPFAM" id="SSF55826">
    <property type="entry name" value="YbaK/ProRS associated domain"/>
    <property type="match status" value="1"/>
</dbReference>
<dbReference type="PROSITE" id="PS50862">
    <property type="entry name" value="AA_TRNA_LIGASE_II"/>
    <property type="match status" value="1"/>
</dbReference>
<organism>
    <name type="scientific">Klebsiella pneumoniae (strain 342)</name>
    <dbReference type="NCBI Taxonomy" id="507522"/>
    <lineage>
        <taxon>Bacteria</taxon>
        <taxon>Pseudomonadati</taxon>
        <taxon>Pseudomonadota</taxon>
        <taxon>Gammaproteobacteria</taxon>
        <taxon>Enterobacterales</taxon>
        <taxon>Enterobacteriaceae</taxon>
        <taxon>Klebsiella/Raoultella group</taxon>
        <taxon>Klebsiella</taxon>
        <taxon>Klebsiella pneumoniae complex</taxon>
    </lineage>
</organism>
<name>SYP_KLEP3</name>